<proteinExistence type="evidence at protein level"/>
<sequence>MQRTLVLIKPDAFERSLVAEIMGRIEKKNFKIVSMKFWSKAPRNLIEQHYKEHSEQSYFNDNCDFMVSGPIISIVYEGTDAISKIRRLQGNILTPGTIRGDLANDIRENLIHASDSEDSAVDEISIWFPETKMETDN</sequence>
<evidence type="ECO:0000250" key="1"/>
<evidence type="ECO:0000255" key="2">
    <source>
        <dbReference type="PROSITE-ProRule" id="PRU10030"/>
    </source>
</evidence>
<evidence type="ECO:0000269" key="3">
    <source>
    </source>
</evidence>
<evidence type="ECO:0000269" key="4">
    <source>
    </source>
</evidence>
<evidence type="ECO:0000305" key="5"/>
<evidence type="ECO:0007829" key="6">
    <source>
        <dbReference type="PDB" id="3EM1"/>
    </source>
</evidence>
<comment type="function">
    <text>Plays a role in the synthesis of nucleoside triphosphates. This activity may optimize the replication of the AT-rich (73%) viral genome in a thymidine-limited host environment.</text>
</comment>
<comment type="catalytic activity">
    <reaction evidence="2">
        <text>a 2'-deoxyribonucleoside 5'-diphosphate + ATP = a 2'-deoxyribonucleoside 5'-triphosphate + ADP</text>
        <dbReference type="Rhea" id="RHEA:44640"/>
        <dbReference type="ChEBI" id="CHEBI:30616"/>
        <dbReference type="ChEBI" id="CHEBI:61560"/>
        <dbReference type="ChEBI" id="CHEBI:73316"/>
        <dbReference type="ChEBI" id="CHEBI:456216"/>
        <dbReference type="EC" id="2.7.4.6"/>
    </reaction>
</comment>
<comment type="catalytic activity">
    <reaction evidence="2">
        <text>a ribonucleoside 5'-diphosphate + ATP = a ribonucleoside 5'-triphosphate + ADP</text>
        <dbReference type="Rhea" id="RHEA:18113"/>
        <dbReference type="ChEBI" id="CHEBI:30616"/>
        <dbReference type="ChEBI" id="CHEBI:57930"/>
        <dbReference type="ChEBI" id="CHEBI:61557"/>
        <dbReference type="ChEBI" id="CHEBI:456216"/>
        <dbReference type="EC" id="2.7.4.6"/>
    </reaction>
</comment>
<comment type="cofactor">
    <cofactor evidence="1">
        <name>Mg(2+)</name>
        <dbReference type="ChEBI" id="CHEBI:18420"/>
    </cofactor>
</comment>
<comment type="biophysicochemical properties">
    <kinetics>
        <KM evidence="3">140 uM for dGDP</KM>
        <KM evidence="3">41 uM for dGTP</KM>
        <KM evidence="3">5 uM for ADP</KM>
        <KM evidence="3">770 uM for ATP</KM>
        <KM evidence="3">830 uM for GTP</KM>
        <KM evidence="3">100 uM for UDP</KM>
        <KM evidence="3">110 uM for UTP</KM>
        <KM evidence="3">40 uM for CTP</KM>
        <KM evidence="3">50 uM for CDP</KM>
        <KM evidence="3">30 uM for dTTP</KM>
        <KM evidence="3">25 uM for dUTP</KM>
        <Vmax evidence="3">99.0 umol/min/mg enzyme toward dGDP</Vmax>
        <Vmax evidence="3">27.0 umol/min/mg enzyme toward dGTP</Vmax>
        <Vmax evidence="3">50.0 umol/min/mg enzyme toward ADP</Vmax>
        <Vmax evidence="3">140.0 umol/min/mg enzyme toward ATP</Vmax>
        <Vmax evidence="3">450.0 umol/min/mg enzyme toward GTP</Vmax>
        <Vmax evidence="3">110.0 umol/min/mg enzyme toward UDP</Vmax>
        <Vmax evidence="3">41.0 umol/min/mg enzyme toward UTP</Vmax>
        <Vmax evidence="3">25.0 umol/min/mg enzyme toward CTP</Vmax>
        <Vmax evidence="3">70.0 umol/min/mg enzyme toward CDP</Vmax>
        <text>KM values are below 10 uM for dCDP, dCTP and dUTP.</text>
    </kinetics>
</comment>
<comment type="similarity">
    <text evidence="5">Belongs to the NDK family.</text>
</comment>
<organismHost>
    <name type="scientific">Acanthamoeba polyphaga</name>
    <name type="common">Amoeba</name>
    <dbReference type="NCBI Taxonomy" id="5757"/>
</organismHost>
<reference key="1">
    <citation type="journal article" date="2004" name="Science">
        <title>The 1.2-megabase genome sequence of Mimivirus.</title>
        <authorList>
            <person name="Raoult D."/>
            <person name="Audic S."/>
            <person name="Robert C."/>
            <person name="Abergel C."/>
            <person name="Renesto P."/>
            <person name="Ogata H."/>
            <person name="La Scola B."/>
            <person name="Susan M."/>
            <person name="Claverie J.-M."/>
        </authorList>
    </citation>
    <scope>NUCLEOTIDE SEQUENCE [LARGE SCALE GENOMIC DNA]</scope>
    <source>
        <strain>Rowbotham-Bradford</strain>
    </source>
</reference>
<reference key="2">
    <citation type="journal article" date="2006" name="J. Bioenerg. Biomembr.">
        <title>The nucleoside diphosphate kinase from mimivirus: a peculiar affinity for deoxypyrimidine nucleotides.</title>
        <authorList>
            <person name="Jeudy S."/>
            <person name="Claverie J.-M."/>
            <person name="Abergel C."/>
        </authorList>
    </citation>
    <scope>CHARACTERIZATION</scope>
    <scope>BIOPHYSICOCHEMICAL PROPERTIES</scope>
    <source>
        <strain>Rowbotham-Bradford</strain>
    </source>
</reference>
<reference key="3">
    <citation type="journal article" date="2009" name="J. Invertebr. Pathol.">
        <title>Mimivirus and Mimiviridae: giant viruses with an increasing number of potential hosts, including corals and sponges.</title>
        <authorList>
            <person name="Claverie J.M."/>
            <person name="Grzela R."/>
            <person name="Lartigue A."/>
            <person name="Bernadac A."/>
            <person name="Nitsche S."/>
            <person name="Vacelet J."/>
            <person name="Ogata H."/>
            <person name="Abergel C."/>
        </authorList>
    </citation>
    <scope>MUTAGENESIS OF ASN-62 AND ARG-107</scope>
    <source>
        <strain>Rowbotham-Bradford</strain>
    </source>
</reference>
<reference key="4">
    <citation type="journal article" date="2005" name="Acta Crystallogr. F">
        <title>Acanthamoeba polyphaga mimivirus NDK: preliminary crystallographic analysis of the first viral nucleoside diphosphate kinase.</title>
        <authorList>
            <person name="Jeudy S."/>
            <person name="Coutard B."/>
            <person name="Lebrun R."/>
            <person name="Abergel C."/>
        </authorList>
    </citation>
    <scope>X-RAY CRYSTALLOGRAPHY (2.5 ANGSTROMS) IN COMPLEX WITH ATP ANALOG</scope>
    <source>
        <strain>Rowbotham-Bradford</strain>
    </source>
</reference>
<keyword id="KW-0002">3D-structure</keyword>
<keyword id="KW-0067">ATP-binding</keyword>
<keyword id="KW-0418">Kinase</keyword>
<keyword id="KW-0460">Magnesium</keyword>
<keyword id="KW-0479">Metal-binding</keyword>
<keyword id="KW-0546">Nucleotide metabolism</keyword>
<keyword id="KW-0547">Nucleotide-binding</keyword>
<keyword id="KW-0597">Phosphoprotein</keyword>
<keyword id="KW-1185">Reference proteome</keyword>
<keyword id="KW-0808">Transferase</keyword>
<protein>
    <recommendedName>
        <fullName>Nucleoside diphosphate kinase</fullName>
        <shortName>NDK</shortName>
        <shortName>NDP kinase</shortName>
        <ecNumber>2.7.4.6</ecNumber>
    </recommendedName>
</protein>
<accession>Q5UQL3</accession>
<feature type="chain" id="PRO_0000137154" description="Nucleoside diphosphate kinase">
    <location>
        <begin position="1"/>
        <end position="137"/>
    </location>
</feature>
<feature type="active site" description="Pros-phosphohistidine intermediate" evidence="2">
    <location>
        <position position="112"/>
    </location>
</feature>
<feature type="binding site">
    <location>
        <position position="9"/>
    </location>
    <ligand>
        <name>ATP</name>
        <dbReference type="ChEBI" id="CHEBI:30616"/>
    </ligand>
</feature>
<feature type="binding site">
    <location>
        <position position="58"/>
    </location>
    <ligand>
        <name>ATP</name>
        <dbReference type="ChEBI" id="CHEBI:30616"/>
    </ligand>
</feature>
<feature type="binding site">
    <location>
        <position position="86"/>
    </location>
    <ligand>
        <name>ATP</name>
        <dbReference type="ChEBI" id="CHEBI:30616"/>
    </ligand>
</feature>
<feature type="binding site">
    <location>
        <position position="99"/>
    </location>
    <ligand>
        <name>ATP</name>
        <dbReference type="ChEBI" id="CHEBI:30616"/>
    </ligand>
</feature>
<feature type="binding site">
    <location>
        <position position="109"/>
    </location>
    <ligand>
        <name>ATP</name>
        <dbReference type="ChEBI" id="CHEBI:30616"/>
    </ligand>
</feature>
<feature type="mutagenesis site" description="Increased affinity for NTP and decreased affinity for dNTP." evidence="4">
    <original>N</original>
    <variation>L</variation>
    <location>
        <position position="62"/>
    </location>
</feature>
<feature type="mutagenesis site" description="Complete loss of affinity for pyrimidine bases." evidence="4">
    <original>R</original>
    <variation>G</variation>
    <location>
        <position position="107"/>
    </location>
</feature>
<feature type="strand" evidence="6">
    <location>
        <begin position="2"/>
        <end position="8"/>
    </location>
</feature>
<feature type="helix" evidence="6">
    <location>
        <begin position="10"/>
        <end position="14"/>
    </location>
</feature>
<feature type="helix" evidence="6">
    <location>
        <begin position="18"/>
        <end position="27"/>
    </location>
</feature>
<feature type="strand" evidence="6">
    <location>
        <begin position="31"/>
        <end position="40"/>
    </location>
</feature>
<feature type="helix" evidence="6">
    <location>
        <begin position="43"/>
        <end position="49"/>
    </location>
</feature>
<feature type="helix" evidence="6">
    <location>
        <begin position="51"/>
        <end position="53"/>
    </location>
</feature>
<feature type="helix" evidence="6">
    <location>
        <begin position="59"/>
        <end position="66"/>
    </location>
</feature>
<feature type="strand" evidence="6">
    <location>
        <begin position="71"/>
        <end position="78"/>
    </location>
</feature>
<feature type="helix" evidence="6">
    <location>
        <begin position="81"/>
        <end position="89"/>
    </location>
</feature>
<feature type="helix" evidence="6">
    <location>
        <begin position="98"/>
        <end position="102"/>
    </location>
</feature>
<feature type="strand" evidence="6">
    <location>
        <begin position="105"/>
        <end position="107"/>
    </location>
</feature>
<feature type="strand" evidence="6">
    <location>
        <begin position="110"/>
        <end position="113"/>
    </location>
</feature>
<feature type="helix" evidence="6">
    <location>
        <begin position="117"/>
        <end position="127"/>
    </location>
</feature>
<dbReference type="EC" id="2.7.4.6"/>
<dbReference type="EMBL" id="AY653733">
    <property type="protein sequence ID" value="AAV50687.1"/>
    <property type="molecule type" value="Genomic_DNA"/>
</dbReference>
<dbReference type="PDB" id="2B8P">
    <property type="method" value="X-ray"/>
    <property type="resolution" value="2.55 A"/>
    <property type="chains" value="A/B=2-137"/>
</dbReference>
<dbReference type="PDB" id="2B8Q">
    <property type="method" value="X-ray"/>
    <property type="resolution" value="2.50 A"/>
    <property type="chains" value="A/B/C/D/E/F=2-137"/>
</dbReference>
<dbReference type="PDB" id="3B6B">
    <property type="method" value="X-ray"/>
    <property type="resolution" value="2.00 A"/>
    <property type="chains" value="A/B/C/D/E/F=2-137"/>
</dbReference>
<dbReference type="PDB" id="3DDI">
    <property type="method" value="X-ray"/>
    <property type="resolution" value="1.90 A"/>
    <property type="chains" value="A/B=2-137"/>
</dbReference>
<dbReference type="PDB" id="3DKD">
    <property type="method" value="X-ray"/>
    <property type="resolution" value="1.90 A"/>
    <property type="chains" value="A/B=2-137"/>
</dbReference>
<dbReference type="PDB" id="3EE3">
    <property type="method" value="X-ray"/>
    <property type="resolution" value="2.40 A"/>
    <property type="chains" value="A/B/C/D/E/F=2-137"/>
</dbReference>
<dbReference type="PDB" id="3EIC">
    <property type="method" value="X-ray"/>
    <property type="resolution" value="2.30 A"/>
    <property type="chains" value="A/B/C/D/E/F=2-137"/>
</dbReference>
<dbReference type="PDB" id="3EJM">
    <property type="method" value="X-ray"/>
    <property type="resolution" value="1.95 A"/>
    <property type="chains" value="A/B=2-137"/>
</dbReference>
<dbReference type="PDB" id="3ELH">
    <property type="method" value="X-ray"/>
    <property type="resolution" value="2.40 A"/>
    <property type="chains" value="A/B/C/D/E/F=2-137"/>
</dbReference>
<dbReference type="PDB" id="3EM1">
    <property type="method" value="X-ray"/>
    <property type="resolution" value="1.50 A"/>
    <property type="chains" value="A/B=2-137"/>
</dbReference>
<dbReference type="PDB" id="3EMT">
    <property type="method" value="X-ray"/>
    <property type="resolution" value="1.60 A"/>
    <property type="chains" value="A/B=2-137"/>
</dbReference>
<dbReference type="PDB" id="3ENA">
    <property type="method" value="X-ray"/>
    <property type="resolution" value="1.60 A"/>
    <property type="chains" value="A/B=2-137"/>
</dbReference>
<dbReference type="PDB" id="3ETM">
    <property type="method" value="X-ray"/>
    <property type="resolution" value="1.90 A"/>
    <property type="chains" value="A/B=2-137"/>
</dbReference>
<dbReference type="PDB" id="3EVM">
    <property type="method" value="X-ray"/>
    <property type="resolution" value="1.80 A"/>
    <property type="chains" value="A/B=2-137"/>
</dbReference>
<dbReference type="PDB" id="3EVO">
    <property type="method" value="X-ray"/>
    <property type="resolution" value="1.50 A"/>
    <property type="chains" value="A/B=2-137"/>
</dbReference>
<dbReference type="PDB" id="3EVW">
    <property type="method" value="X-ray"/>
    <property type="resolution" value="2.60 A"/>
    <property type="chains" value="A/B/C/D/E/F=2-137"/>
</dbReference>
<dbReference type="PDB" id="3FBB">
    <property type="method" value="X-ray"/>
    <property type="resolution" value="2.40 A"/>
    <property type="chains" value="A/B/C/D/E/F=2-137"/>
</dbReference>
<dbReference type="PDB" id="3FBC">
    <property type="method" value="X-ray"/>
    <property type="resolution" value="2.60 A"/>
    <property type="chains" value="A/B/C/D/E/F=2-137"/>
</dbReference>
<dbReference type="PDB" id="3FBE">
    <property type="method" value="X-ray"/>
    <property type="resolution" value="2.40 A"/>
    <property type="chains" value="A/B/C/D/E/F=2-137"/>
</dbReference>
<dbReference type="PDB" id="3FBF">
    <property type="method" value="X-ray"/>
    <property type="resolution" value="2.60 A"/>
    <property type="chains" value="A/B/C/D/E/F=2-137"/>
</dbReference>
<dbReference type="PDB" id="3FC9">
    <property type="method" value="X-ray"/>
    <property type="resolution" value="2.80 A"/>
    <property type="chains" value="A/B/C/D/E/F=2-137"/>
</dbReference>
<dbReference type="PDB" id="3FCV">
    <property type="method" value="X-ray"/>
    <property type="resolution" value="2.40 A"/>
    <property type="chains" value="A/B=2-137"/>
</dbReference>
<dbReference type="PDB" id="3FCW">
    <property type="method" value="X-ray"/>
    <property type="resolution" value="2.40 A"/>
    <property type="chains" value="A/B/C/D/E/F=2-137"/>
</dbReference>
<dbReference type="PDB" id="3G2X">
    <property type="method" value="X-ray"/>
    <property type="resolution" value="2.70 A"/>
    <property type="chains" value="A/B/C/D/E/F=2-137"/>
</dbReference>
<dbReference type="PDB" id="3GP9">
    <property type="method" value="X-ray"/>
    <property type="resolution" value="1.80 A"/>
    <property type="chains" value="A/B/C/D/E/F=2-137"/>
</dbReference>
<dbReference type="PDB" id="3GPA">
    <property type="method" value="X-ray"/>
    <property type="resolution" value="2.00 A"/>
    <property type="chains" value="A/B/C/D/E/F=2-137"/>
</dbReference>
<dbReference type="PDBsum" id="2B8P"/>
<dbReference type="PDBsum" id="2B8Q"/>
<dbReference type="PDBsum" id="3B6B"/>
<dbReference type="PDBsum" id="3DDI"/>
<dbReference type="PDBsum" id="3DKD"/>
<dbReference type="PDBsum" id="3EE3"/>
<dbReference type="PDBsum" id="3EIC"/>
<dbReference type="PDBsum" id="3EJM"/>
<dbReference type="PDBsum" id="3ELH"/>
<dbReference type="PDBsum" id="3EM1"/>
<dbReference type="PDBsum" id="3EMT"/>
<dbReference type="PDBsum" id="3ENA"/>
<dbReference type="PDBsum" id="3ETM"/>
<dbReference type="PDBsum" id="3EVM"/>
<dbReference type="PDBsum" id="3EVO"/>
<dbReference type="PDBsum" id="3EVW"/>
<dbReference type="PDBsum" id="3FBB"/>
<dbReference type="PDBsum" id="3FBC"/>
<dbReference type="PDBsum" id="3FBE"/>
<dbReference type="PDBsum" id="3FBF"/>
<dbReference type="PDBsum" id="3FC9"/>
<dbReference type="PDBsum" id="3FCV"/>
<dbReference type="PDBsum" id="3FCW"/>
<dbReference type="PDBsum" id="3G2X"/>
<dbReference type="PDBsum" id="3GP9"/>
<dbReference type="PDBsum" id="3GPA"/>
<dbReference type="SMR" id="Q5UQL3"/>
<dbReference type="KEGG" id="vg:9925039"/>
<dbReference type="OrthoDB" id="20570at10239"/>
<dbReference type="BRENDA" id="2.7.4.6">
    <property type="organism ID" value="9231"/>
</dbReference>
<dbReference type="SABIO-RK" id="Q5UQL3"/>
<dbReference type="EvolutionaryTrace" id="Q5UQL3"/>
<dbReference type="Proteomes" id="UP000001134">
    <property type="component" value="Genome"/>
</dbReference>
<dbReference type="GO" id="GO:0005524">
    <property type="term" value="F:ATP binding"/>
    <property type="evidence" value="ECO:0007669"/>
    <property type="project" value="UniProtKB-KW"/>
</dbReference>
<dbReference type="GO" id="GO:0046872">
    <property type="term" value="F:metal ion binding"/>
    <property type="evidence" value="ECO:0007669"/>
    <property type="project" value="UniProtKB-KW"/>
</dbReference>
<dbReference type="GO" id="GO:0004550">
    <property type="term" value="F:nucleoside diphosphate kinase activity"/>
    <property type="evidence" value="ECO:0007669"/>
    <property type="project" value="UniProtKB-EC"/>
</dbReference>
<dbReference type="GO" id="GO:0006241">
    <property type="term" value="P:CTP biosynthetic process"/>
    <property type="evidence" value="ECO:0007669"/>
    <property type="project" value="InterPro"/>
</dbReference>
<dbReference type="GO" id="GO:0006183">
    <property type="term" value="P:GTP biosynthetic process"/>
    <property type="evidence" value="ECO:0007669"/>
    <property type="project" value="InterPro"/>
</dbReference>
<dbReference type="GO" id="GO:0006228">
    <property type="term" value="P:UTP biosynthetic process"/>
    <property type="evidence" value="ECO:0007669"/>
    <property type="project" value="InterPro"/>
</dbReference>
<dbReference type="CDD" id="cd04413">
    <property type="entry name" value="NDPk_I"/>
    <property type="match status" value="1"/>
</dbReference>
<dbReference type="FunFam" id="3.30.70.141:FF:000003">
    <property type="entry name" value="Nucleoside diphosphate kinase"/>
    <property type="match status" value="1"/>
</dbReference>
<dbReference type="Gene3D" id="3.30.70.141">
    <property type="entry name" value="Nucleoside diphosphate kinase-like domain"/>
    <property type="match status" value="1"/>
</dbReference>
<dbReference type="InterPro" id="IPR034907">
    <property type="entry name" value="NDK-like_dom"/>
</dbReference>
<dbReference type="InterPro" id="IPR036850">
    <property type="entry name" value="NDK-like_dom_sf"/>
</dbReference>
<dbReference type="InterPro" id="IPR001564">
    <property type="entry name" value="Nucleoside_diP_kinase"/>
</dbReference>
<dbReference type="InterPro" id="IPR023005">
    <property type="entry name" value="Nucleoside_diP_kinase_AS"/>
</dbReference>
<dbReference type="PANTHER" id="PTHR11349">
    <property type="entry name" value="NUCLEOSIDE DIPHOSPHATE KINASE"/>
    <property type="match status" value="1"/>
</dbReference>
<dbReference type="Pfam" id="PF00334">
    <property type="entry name" value="NDK"/>
    <property type="match status" value="1"/>
</dbReference>
<dbReference type="PRINTS" id="PR01243">
    <property type="entry name" value="NUCDPKINASE"/>
</dbReference>
<dbReference type="SMART" id="SM00562">
    <property type="entry name" value="NDK"/>
    <property type="match status" value="1"/>
</dbReference>
<dbReference type="SUPFAM" id="SSF54919">
    <property type="entry name" value="Nucleoside diphosphate kinase, NDK"/>
    <property type="match status" value="1"/>
</dbReference>
<dbReference type="PROSITE" id="PS00469">
    <property type="entry name" value="NDPK"/>
    <property type="match status" value="1"/>
</dbReference>
<dbReference type="PROSITE" id="PS51374">
    <property type="entry name" value="NDPK_LIKE"/>
    <property type="match status" value="1"/>
</dbReference>
<organism>
    <name type="scientific">Acanthamoeba polyphaga mimivirus</name>
    <name type="common">APMV</name>
    <dbReference type="NCBI Taxonomy" id="212035"/>
    <lineage>
        <taxon>Viruses</taxon>
        <taxon>Varidnaviria</taxon>
        <taxon>Bamfordvirae</taxon>
        <taxon>Nucleocytoviricota</taxon>
        <taxon>Megaviricetes</taxon>
        <taxon>Imitervirales</taxon>
        <taxon>Mimiviridae</taxon>
        <taxon>Megamimivirinae</taxon>
        <taxon>Mimivirus</taxon>
        <taxon>Mimivirus bradfordmassiliense</taxon>
    </lineage>
</organism>
<gene>
    <name type="primary">NDK</name>
    <name type="ordered locus">MIMI_R418</name>
</gene>
<name>NDK_MIMIV</name>